<comment type="function">
    <text evidence="1">This protein is one of the two subunits of integration host factor, a specific DNA-binding protein that functions in genetic recombination as well as in transcriptional and translational control.</text>
</comment>
<comment type="subunit">
    <text evidence="1">Heterodimer of an alpha and a beta chain.</text>
</comment>
<comment type="similarity">
    <text evidence="1">Belongs to the bacterial histone-like protein family.</text>
</comment>
<reference key="1">
    <citation type="journal article" date="2009" name="PLoS ONE">
        <title>Salmonella paratyphi C: genetic divergence from Salmonella choleraesuis and pathogenic convergence with Salmonella typhi.</title>
        <authorList>
            <person name="Liu W.-Q."/>
            <person name="Feng Y."/>
            <person name="Wang Y."/>
            <person name="Zou Q.-H."/>
            <person name="Chen F."/>
            <person name="Guo J.-T."/>
            <person name="Peng Y.-H."/>
            <person name="Jin Y."/>
            <person name="Li Y.-G."/>
            <person name="Hu S.-N."/>
            <person name="Johnston R.N."/>
            <person name="Liu G.-R."/>
            <person name="Liu S.-L."/>
        </authorList>
    </citation>
    <scope>NUCLEOTIDE SEQUENCE [LARGE SCALE GENOMIC DNA]</scope>
    <source>
        <strain>RKS4594</strain>
    </source>
</reference>
<dbReference type="EMBL" id="CP000857">
    <property type="protein sequence ID" value="ACN46506.1"/>
    <property type="molecule type" value="Genomic_DNA"/>
</dbReference>
<dbReference type="RefSeq" id="WP_001229266.1">
    <property type="nucleotide sequence ID" value="NC_012125.1"/>
</dbReference>
<dbReference type="SMR" id="C0Q640"/>
<dbReference type="GeneID" id="92828695"/>
<dbReference type="KEGG" id="sei:SPC_2392"/>
<dbReference type="HOGENOM" id="CLU_105066_1_3_6"/>
<dbReference type="Proteomes" id="UP000001599">
    <property type="component" value="Chromosome"/>
</dbReference>
<dbReference type="GO" id="GO:0005829">
    <property type="term" value="C:cytosol"/>
    <property type="evidence" value="ECO:0007669"/>
    <property type="project" value="TreeGrafter"/>
</dbReference>
<dbReference type="GO" id="GO:0003677">
    <property type="term" value="F:DNA binding"/>
    <property type="evidence" value="ECO:0007669"/>
    <property type="project" value="UniProtKB-UniRule"/>
</dbReference>
<dbReference type="GO" id="GO:0030527">
    <property type="term" value="F:structural constituent of chromatin"/>
    <property type="evidence" value="ECO:0007669"/>
    <property type="project" value="InterPro"/>
</dbReference>
<dbReference type="GO" id="GO:0006310">
    <property type="term" value="P:DNA recombination"/>
    <property type="evidence" value="ECO:0007669"/>
    <property type="project" value="UniProtKB-UniRule"/>
</dbReference>
<dbReference type="GO" id="GO:0009893">
    <property type="term" value="P:positive regulation of metabolic process"/>
    <property type="evidence" value="ECO:0007669"/>
    <property type="project" value="UniProtKB-ARBA"/>
</dbReference>
<dbReference type="GO" id="GO:0006355">
    <property type="term" value="P:regulation of DNA-templated transcription"/>
    <property type="evidence" value="ECO:0007669"/>
    <property type="project" value="UniProtKB-UniRule"/>
</dbReference>
<dbReference type="GO" id="GO:0006417">
    <property type="term" value="P:regulation of translation"/>
    <property type="evidence" value="ECO:0007669"/>
    <property type="project" value="UniProtKB-UniRule"/>
</dbReference>
<dbReference type="CDD" id="cd13835">
    <property type="entry name" value="IHF_A"/>
    <property type="match status" value="1"/>
</dbReference>
<dbReference type="FunFam" id="4.10.520.10:FF:000002">
    <property type="entry name" value="Integration host factor subunit alpha"/>
    <property type="match status" value="1"/>
</dbReference>
<dbReference type="Gene3D" id="4.10.520.10">
    <property type="entry name" value="IHF-like DNA-binding proteins"/>
    <property type="match status" value="1"/>
</dbReference>
<dbReference type="HAMAP" id="MF_00380">
    <property type="entry name" value="IHF_alpha"/>
    <property type="match status" value="1"/>
</dbReference>
<dbReference type="InterPro" id="IPR000119">
    <property type="entry name" value="Hist_DNA-bd"/>
</dbReference>
<dbReference type="InterPro" id="IPR020816">
    <property type="entry name" value="Histone-like_DNA-bd_CS"/>
</dbReference>
<dbReference type="InterPro" id="IPR010992">
    <property type="entry name" value="IHF-like_DNA-bd_dom_sf"/>
</dbReference>
<dbReference type="InterPro" id="IPR005684">
    <property type="entry name" value="IHF_alpha"/>
</dbReference>
<dbReference type="NCBIfam" id="TIGR00987">
    <property type="entry name" value="himA"/>
    <property type="match status" value="1"/>
</dbReference>
<dbReference type="NCBIfam" id="NF001401">
    <property type="entry name" value="PRK00285.1"/>
    <property type="match status" value="1"/>
</dbReference>
<dbReference type="PANTHER" id="PTHR33175">
    <property type="entry name" value="DNA-BINDING PROTEIN HU"/>
    <property type="match status" value="1"/>
</dbReference>
<dbReference type="PANTHER" id="PTHR33175:SF2">
    <property type="entry name" value="INTEGRATION HOST FACTOR SUBUNIT ALPHA"/>
    <property type="match status" value="1"/>
</dbReference>
<dbReference type="Pfam" id="PF00216">
    <property type="entry name" value="Bac_DNA_binding"/>
    <property type="match status" value="1"/>
</dbReference>
<dbReference type="PRINTS" id="PR01727">
    <property type="entry name" value="DNABINDINGHU"/>
</dbReference>
<dbReference type="SMART" id="SM00411">
    <property type="entry name" value="BHL"/>
    <property type="match status" value="1"/>
</dbReference>
<dbReference type="SUPFAM" id="SSF47729">
    <property type="entry name" value="IHF-like DNA-binding proteins"/>
    <property type="match status" value="1"/>
</dbReference>
<dbReference type="PROSITE" id="PS00045">
    <property type="entry name" value="HISTONE_LIKE"/>
    <property type="match status" value="1"/>
</dbReference>
<accession>C0Q640</accession>
<organism>
    <name type="scientific">Salmonella paratyphi C (strain RKS4594)</name>
    <dbReference type="NCBI Taxonomy" id="476213"/>
    <lineage>
        <taxon>Bacteria</taxon>
        <taxon>Pseudomonadati</taxon>
        <taxon>Pseudomonadota</taxon>
        <taxon>Gammaproteobacteria</taxon>
        <taxon>Enterobacterales</taxon>
        <taxon>Enterobacteriaceae</taxon>
        <taxon>Salmonella</taxon>
    </lineage>
</organism>
<feature type="chain" id="PRO_1000190428" description="Integration host factor subunit alpha">
    <location>
        <begin position="1"/>
        <end position="99"/>
    </location>
</feature>
<feature type="region of interest" description="Disordered" evidence="2">
    <location>
        <begin position="49"/>
        <end position="75"/>
    </location>
</feature>
<gene>
    <name evidence="1" type="primary">ihfA</name>
    <name evidence="1" type="synonym">himA</name>
    <name type="ordered locus">SPC_2392</name>
</gene>
<sequence length="99" mass="11368">MALTKAEMSEYLFDKLGLSKRDAKELVELFFEEIRRALENGEQVKLSGFGNFDLRDKNQRPGRNPKTGEDIPITARRVVTFRPGQKLKSRVENASPKEE</sequence>
<evidence type="ECO:0000255" key="1">
    <source>
        <dbReference type="HAMAP-Rule" id="MF_00380"/>
    </source>
</evidence>
<evidence type="ECO:0000256" key="2">
    <source>
        <dbReference type="SAM" id="MobiDB-lite"/>
    </source>
</evidence>
<keyword id="KW-0233">DNA recombination</keyword>
<keyword id="KW-0238">DNA-binding</keyword>
<keyword id="KW-0804">Transcription</keyword>
<keyword id="KW-0805">Transcription regulation</keyword>
<keyword id="KW-0810">Translation regulation</keyword>
<name>IHFA_SALPC</name>
<protein>
    <recommendedName>
        <fullName evidence="1">Integration host factor subunit alpha</fullName>
        <shortName evidence="1">IHF-alpha</shortName>
    </recommendedName>
</protein>
<proteinExistence type="inferred from homology"/>